<name>MNT3_YEAST</name>
<sequence>MLKSLKSRRLILKRLVTLLLSLFFSYLIFSASRNVTSSNKLNNHASERTAVESSAFNWIEKRQHQVRSENLMNRLSAYFLPFLSRSSHKERVLLRQLGNNEIAKSDKCRYIFEVLYKIDPDWDNAQTAKFYNVDGVDNTLASLLGERLRSYDYCFLSGQLDPTAIFANSTVNPHDLQNRMFPFLKKINEESKTVMWPIITDMTTGEAVPAPEVDMESSNFNGNFWSNWNRLSKGRGFVLTIAEKDVPLFLKQLKVMEFSKNELPFQIVSTGNELSAESIAKISETAKETEQRVYLVDCSTVLDTNFANTYISFFQNKWVATLFNTFEEYILLDADVVPFVGSDYFFDSPSYRESGILLFKDRVMENEQTFQYCIEMLNEVEPSAQERRFIGSRLVFDSSLPFSSETSEEASVYYNFFKKLRLHHVDSGLVVVNKLEKLNGLLMSFMLNLDGKLQRCVYGDKEIFWLGQLYAGQDYSINPVDGSIIGPVNEEPENDDGHKSGMYYICSTQIAHSDSKNRLLWVNGGLKTCKISNSAEDDFGREPEYFKSRYGDISKLKRIYDASLNVEGLIVPDVSVHPWMQIKECSNYMYCAYATGDGHTNSELDEGRLITFTEKELRYINDISRTWNAN</sequence>
<dbReference type="EC" id="2.4.1.-"/>
<dbReference type="EMBL" id="Z46881">
    <property type="protein sequence ID" value="CAA86979.1"/>
    <property type="molecule type" value="Genomic_DNA"/>
</dbReference>
<dbReference type="EMBL" id="AY558107">
    <property type="protein sequence ID" value="AAS56433.1"/>
    <property type="molecule type" value="Genomic_DNA"/>
</dbReference>
<dbReference type="EMBL" id="BK006942">
    <property type="protein sequence ID" value="DAA08532.1"/>
    <property type="molecule type" value="Genomic_DNA"/>
</dbReference>
<dbReference type="PIR" id="S49969">
    <property type="entry name" value="S49969"/>
</dbReference>
<dbReference type="RefSeq" id="NP_012251.3">
    <property type="nucleotide sequence ID" value="NM_001179364.3"/>
</dbReference>
<dbReference type="SMR" id="P40549"/>
<dbReference type="BioGRID" id="34977">
    <property type="interactions" value="71"/>
</dbReference>
<dbReference type="DIP" id="DIP-4122N"/>
<dbReference type="FunCoup" id="P40549">
    <property type="interactions" value="46"/>
</dbReference>
<dbReference type="IntAct" id="P40549">
    <property type="interactions" value="1"/>
</dbReference>
<dbReference type="STRING" id="4932.YIL014W"/>
<dbReference type="CAZy" id="GT71">
    <property type="family name" value="Glycosyltransferase Family 71"/>
</dbReference>
<dbReference type="GlyCosmos" id="P40549">
    <property type="glycosylation" value="2 sites, No reported glycans"/>
</dbReference>
<dbReference type="GlyGen" id="P40549">
    <property type="glycosylation" value="2 sites"/>
</dbReference>
<dbReference type="PaxDb" id="4932-YIL014W"/>
<dbReference type="PeptideAtlas" id="P40549"/>
<dbReference type="EnsemblFungi" id="YIL014W_mRNA">
    <property type="protein sequence ID" value="YIL014W"/>
    <property type="gene ID" value="YIL014W"/>
</dbReference>
<dbReference type="GeneID" id="854801"/>
<dbReference type="KEGG" id="sce:YIL014W"/>
<dbReference type="AGR" id="SGD:S000001276"/>
<dbReference type="SGD" id="S000001276">
    <property type="gene designation" value="MNT3"/>
</dbReference>
<dbReference type="VEuPathDB" id="FungiDB:YIL014W"/>
<dbReference type="eggNOG" id="ENOG502RZ48">
    <property type="taxonomic scope" value="Eukaryota"/>
</dbReference>
<dbReference type="GeneTree" id="ENSGT00940000176340"/>
<dbReference type="HOGENOM" id="CLU_015387_1_0_1"/>
<dbReference type="InParanoid" id="P40549"/>
<dbReference type="OMA" id="FFWLGQL"/>
<dbReference type="OrthoDB" id="430354at2759"/>
<dbReference type="BioCyc" id="MetaCyc:G3O-31290-MONOMER"/>
<dbReference type="BioCyc" id="YEAST:G3O-31290-MONOMER"/>
<dbReference type="UniPathway" id="UPA00378"/>
<dbReference type="BioGRID-ORCS" id="854801">
    <property type="hits" value="0 hits in 10 CRISPR screens"/>
</dbReference>
<dbReference type="PRO" id="PR:P40549"/>
<dbReference type="Proteomes" id="UP000002311">
    <property type="component" value="Chromosome IX"/>
</dbReference>
<dbReference type="RNAct" id="P40549">
    <property type="molecule type" value="protein"/>
</dbReference>
<dbReference type="GO" id="GO:0000324">
    <property type="term" value="C:fungal-type vacuole"/>
    <property type="evidence" value="ECO:0007005"/>
    <property type="project" value="SGD"/>
</dbReference>
<dbReference type="GO" id="GO:0005794">
    <property type="term" value="C:Golgi apparatus"/>
    <property type="evidence" value="ECO:0000314"/>
    <property type="project" value="SGD"/>
</dbReference>
<dbReference type="GO" id="GO:0000139">
    <property type="term" value="C:Golgi membrane"/>
    <property type="evidence" value="ECO:0007669"/>
    <property type="project" value="UniProtKB-SubCell"/>
</dbReference>
<dbReference type="GO" id="GO:0000033">
    <property type="term" value="F:alpha-1,3-mannosyltransferase activity"/>
    <property type="evidence" value="ECO:0000315"/>
    <property type="project" value="SGD"/>
</dbReference>
<dbReference type="GO" id="GO:0006493">
    <property type="term" value="P:protein O-linked glycosylation"/>
    <property type="evidence" value="ECO:0000315"/>
    <property type="project" value="SGD"/>
</dbReference>
<dbReference type="InterPro" id="IPR022751">
    <property type="entry name" value="Alpha_mannosyltransferase"/>
</dbReference>
<dbReference type="InterPro" id="IPR029044">
    <property type="entry name" value="Nucleotide-diphossugar_trans"/>
</dbReference>
<dbReference type="PANTHER" id="PTHR31392">
    <property type="entry name" value="ALPHA-1,3-MANNOSYLTRANSFERASE MNN1-RELATED"/>
    <property type="match status" value="1"/>
</dbReference>
<dbReference type="PANTHER" id="PTHR31392:SF1">
    <property type="entry name" value="ALPHA-1,3-MANNOSYLTRANSFERASE MNN1-RELATED"/>
    <property type="match status" value="1"/>
</dbReference>
<dbReference type="Pfam" id="PF11051">
    <property type="entry name" value="Mannosyl_trans3"/>
    <property type="match status" value="1"/>
</dbReference>
<dbReference type="SUPFAM" id="SSF53448">
    <property type="entry name" value="Nucleotide-diphospho-sugar transferases"/>
    <property type="match status" value="1"/>
</dbReference>
<accession>P40549</accession>
<accession>D6VVR6</accession>
<keyword id="KW-0325">Glycoprotein</keyword>
<keyword id="KW-0328">Glycosyltransferase</keyword>
<keyword id="KW-0333">Golgi apparatus</keyword>
<keyword id="KW-0472">Membrane</keyword>
<keyword id="KW-1185">Reference proteome</keyword>
<keyword id="KW-0735">Signal-anchor</keyword>
<keyword id="KW-0808">Transferase</keyword>
<keyword id="KW-0812">Transmembrane</keyword>
<keyword id="KW-1133">Transmembrane helix</keyword>
<protein>
    <recommendedName>
        <fullName>Alpha-1,3-mannosyltransferase MNT3</fullName>
        <ecNumber>2.4.1.-</ecNumber>
    </recommendedName>
</protein>
<organism>
    <name type="scientific">Saccharomyces cerevisiae (strain ATCC 204508 / S288c)</name>
    <name type="common">Baker's yeast</name>
    <dbReference type="NCBI Taxonomy" id="559292"/>
    <lineage>
        <taxon>Eukaryota</taxon>
        <taxon>Fungi</taxon>
        <taxon>Dikarya</taxon>
        <taxon>Ascomycota</taxon>
        <taxon>Saccharomycotina</taxon>
        <taxon>Saccharomycetes</taxon>
        <taxon>Saccharomycetales</taxon>
        <taxon>Saccharomycetaceae</taxon>
        <taxon>Saccharomyces</taxon>
    </lineage>
</organism>
<feature type="chain" id="PRO_0000080560" description="Alpha-1,3-mannosyltransferase MNT3">
    <location>
        <begin position="1"/>
        <end position="630"/>
    </location>
</feature>
<feature type="topological domain" description="Cytoplasmic" evidence="1">
    <location>
        <begin position="1"/>
        <end position="14"/>
    </location>
</feature>
<feature type="transmembrane region" description="Helical; Signal-anchor for type II membrane protein" evidence="1">
    <location>
        <begin position="15"/>
        <end position="31"/>
    </location>
</feature>
<feature type="topological domain" description="Lumenal" evidence="1">
    <location>
        <begin position="32"/>
        <end position="630"/>
    </location>
</feature>
<feature type="glycosylation site" description="N-linked (GlcNAc...) asparagine" evidence="1">
    <location>
        <position position="34"/>
    </location>
</feature>
<feature type="glycosylation site" description="N-linked (GlcNAc...) asparagine" evidence="1">
    <location>
        <position position="168"/>
    </location>
</feature>
<reference key="1">
    <citation type="journal article" date="1997" name="Nature">
        <title>The nucleotide sequence of Saccharomyces cerevisiae chromosome IX.</title>
        <authorList>
            <person name="Churcher C.M."/>
            <person name="Bowman S."/>
            <person name="Badcock K."/>
            <person name="Bankier A.T."/>
            <person name="Brown D."/>
            <person name="Chillingworth T."/>
            <person name="Connor R."/>
            <person name="Devlin K."/>
            <person name="Gentles S."/>
            <person name="Hamlin N."/>
            <person name="Harris D.E."/>
            <person name="Horsnell T."/>
            <person name="Hunt S."/>
            <person name="Jagels K."/>
            <person name="Jones M."/>
            <person name="Lye G."/>
            <person name="Moule S."/>
            <person name="Odell C."/>
            <person name="Pearson D."/>
            <person name="Rajandream M.A."/>
            <person name="Rice P."/>
            <person name="Rowley N."/>
            <person name="Skelton J."/>
            <person name="Smith V."/>
            <person name="Walsh S.V."/>
            <person name="Whitehead S."/>
            <person name="Barrell B.G."/>
        </authorList>
    </citation>
    <scope>NUCLEOTIDE SEQUENCE [LARGE SCALE GENOMIC DNA]</scope>
    <source>
        <strain>ATCC 204508 / S288c</strain>
    </source>
</reference>
<reference key="2">
    <citation type="journal article" date="2014" name="G3 (Bethesda)">
        <title>The reference genome sequence of Saccharomyces cerevisiae: Then and now.</title>
        <authorList>
            <person name="Engel S.R."/>
            <person name="Dietrich F.S."/>
            <person name="Fisk D.G."/>
            <person name="Binkley G."/>
            <person name="Balakrishnan R."/>
            <person name="Costanzo M.C."/>
            <person name="Dwight S.S."/>
            <person name="Hitz B.C."/>
            <person name="Karra K."/>
            <person name="Nash R.S."/>
            <person name="Weng S."/>
            <person name="Wong E.D."/>
            <person name="Lloyd P."/>
            <person name="Skrzypek M.S."/>
            <person name="Miyasato S.R."/>
            <person name="Simison M."/>
            <person name="Cherry J.M."/>
        </authorList>
    </citation>
    <scope>GENOME REANNOTATION</scope>
    <source>
        <strain>ATCC 204508 / S288c</strain>
    </source>
</reference>
<reference key="3">
    <citation type="journal article" date="2007" name="Genome Res.">
        <title>Approaching a complete repository of sequence-verified protein-encoding clones for Saccharomyces cerevisiae.</title>
        <authorList>
            <person name="Hu Y."/>
            <person name="Rolfs A."/>
            <person name="Bhullar B."/>
            <person name="Murthy T.V.S."/>
            <person name="Zhu C."/>
            <person name="Berger M.F."/>
            <person name="Camargo A.A."/>
            <person name="Kelley F."/>
            <person name="McCarron S."/>
            <person name="Jepson D."/>
            <person name="Richardson A."/>
            <person name="Raphael J."/>
            <person name="Moreira D."/>
            <person name="Taycher E."/>
            <person name="Zuo D."/>
            <person name="Mohr S."/>
            <person name="Kane M.F."/>
            <person name="Williamson J."/>
            <person name="Simpson A.J.G."/>
            <person name="Bulyk M.L."/>
            <person name="Harlow E."/>
            <person name="Marsischky G."/>
            <person name="Kolodner R.D."/>
            <person name="LaBaer J."/>
        </authorList>
    </citation>
    <scope>NUCLEOTIDE SEQUENCE [GENOMIC DNA]</scope>
    <source>
        <strain>ATCC 204508 / S288c</strain>
    </source>
</reference>
<reference key="4">
    <citation type="journal article" date="1999" name="Glycobiology">
        <title>Mnt2p and Mnt3p of Saccharomyces cerevisiae are members of the Mnn1p family of alpha-1,3-mannosyltransferases responsible for adding the terminal mannose residues of O-linked oligosaccharides.</title>
        <authorList>
            <person name="Romero P.A."/>
            <person name="Lussier M."/>
            <person name="Veronneau S."/>
            <person name="Sdicu A.-M."/>
            <person name="Herscovics A."/>
            <person name="Bussey H."/>
        </authorList>
    </citation>
    <scope>CHARACTERIZATION</scope>
</reference>
<reference key="5">
    <citation type="journal article" date="2003" name="Nature">
        <title>Global analysis of protein expression in yeast.</title>
        <authorList>
            <person name="Ghaemmaghami S."/>
            <person name="Huh W.-K."/>
            <person name="Bower K."/>
            <person name="Howson R.W."/>
            <person name="Belle A."/>
            <person name="Dephoure N."/>
            <person name="O'Shea E.K."/>
            <person name="Weissman J.S."/>
        </authorList>
    </citation>
    <scope>LEVEL OF PROTEIN EXPRESSION [LARGE SCALE ANALYSIS]</scope>
</reference>
<reference key="6">
    <citation type="journal article" date="2012" name="Proc. Natl. Acad. Sci. U.S.A.">
        <title>N-terminal acetylome analyses and functional insights of the N-terminal acetyltransferase NatB.</title>
        <authorList>
            <person name="Van Damme P."/>
            <person name="Lasa M."/>
            <person name="Polevoda B."/>
            <person name="Gazquez C."/>
            <person name="Elosegui-Artola A."/>
            <person name="Kim D.S."/>
            <person name="De Juan-Pardo E."/>
            <person name="Demeyer K."/>
            <person name="Hole K."/>
            <person name="Larrea E."/>
            <person name="Timmerman E."/>
            <person name="Prieto J."/>
            <person name="Arnesen T."/>
            <person name="Sherman F."/>
            <person name="Gevaert K."/>
            <person name="Aldabe R."/>
        </authorList>
    </citation>
    <scope>IDENTIFICATION BY MASS SPECTROMETRY [LARGE SCALE ANALYSIS]</scope>
</reference>
<evidence type="ECO:0000255" key="1"/>
<evidence type="ECO:0000269" key="2">
    <source>
    </source>
</evidence>
<evidence type="ECO:0000305" key="3"/>
<proteinExistence type="evidence at protein level"/>
<comment type="function">
    <text>Mannosyltransferase involved in adding the 4th and 5th mannose residues of O-linked glycans.</text>
</comment>
<comment type="pathway">
    <text>Protein modification; protein glycosylation.</text>
</comment>
<comment type="subcellular location">
    <subcellularLocation>
        <location evidence="3">Golgi apparatus membrane</location>
        <topology evidence="3">Single-pass type II membrane protein</topology>
    </subcellularLocation>
</comment>
<comment type="miscellaneous">
    <text evidence="2">Present with 2310 molecules/cell in log phase SD medium.</text>
</comment>
<comment type="similarity">
    <text evidence="3">Belongs to the MNN1/MNT family.</text>
</comment>
<gene>
    <name type="primary">MNT3</name>
    <name type="ordered locus">YIL014W</name>
</gene>